<dbReference type="EMBL" id="EF614270">
    <property type="protein sequence ID" value="ABQ81485.1"/>
    <property type="molecule type" value="Genomic_DNA"/>
</dbReference>
<dbReference type="RefSeq" id="YP_001542481.1">
    <property type="nucleotide sequence ID" value="NC_009962.1"/>
</dbReference>
<dbReference type="SMR" id="A8SED7"/>
<dbReference type="GeneID" id="5729475"/>
<dbReference type="GO" id="GO:0009507">
    <property type="term" value="C:chloroplast"/>
    <property type="evidence" value="ECO:0007669"/>
    <property type="project" value="UniProtKB-SubCell"/>
</dbReference>
<dbReference type="GO" id="GO:1990904">
    <property type="term" value="C:ribonucleoprotein complex"/>
    <property type="evidence" value="ECO:0007669"/>
    <property type="project" value="UniProtKB-KW"/>
</dbReference>
<dbReference type="GO" id="GO:0005840">
    <property type="term" value="C:ribosome"/>
    <property type="evidence" value="ECO:0007669"/>
    <property type="project" value="UniProtKB-KW"/>
</dbReference>
<dbReference type="GO" id="GO:0003735">
    <property type="term" value="F:structural constituent of ribosome"/>
    <property type="evidence" value="ECO:0007669"/>
    <property type="project" value="InterPro"/>
</dbReference>
<dbReference type="GO" id="GO:0006412">
    <property type="term" value="P:translation"/>
    <property type="evidence" value="ECO:0007669"/>
    <property type="project" value="UniProtKB-UniRule"/>
</dbReference>
<dbReference type="HAMAP" id="MF_00251">
    <property type="entry name" value="Ribosomal_bL36"/>
    <property type="match status" value="1"/>
</dbReference>
<dbReference type="InterPro" id="IPR000473">
    <property type="entry name" value="Ribosomal_bL36"/>
</dbReference>
<dbReference type="InterPro" id="IPR035977">
    <property type="entry name" value="Ribosomal_bL36_sp"/>
</dbReference>
<dbReference type="NCBIfam" id="TIGR01022">
    <property type="entry name" value="rpmJ_bact"/>
    <property type="match status" value="1"/>
</dbReference>
<dbReference type="PANTHER" id="PTHR42888">
    <property type="entry name" value="50S RIBOSOMAL PROTEIN L36, CHLOROPLASTIC"/>
    <property type="match status" value="1"/>
</dbReference>
<dbReference type="PANTHER" id="PTHR42888:SF1">
    <property type="entry name" value="LARGE RIBOSOMAL SUBUNIT PROTEIN BL36C"/>
    <property type="match status" value="1"/>
</dbReference>
<dbReference type="Pfam" id="PF00444">
    <property type="entry name" value="Ribosomal_L36"/>
    <property type="match status" value="1"/>
</dbReference>
<dbReference type="SUPFAM" id="SSF57840">
    <property type="entry name" value="Ribosomal protein L36"/>
    <property type="match status" value="1"/>
</dbReference>
<dbReference type="PROSITE" id="PS00828">
    <property type="entry name" value="RIBOSOMAL_L36"/>
    <property type="match status" value="1"/>
</dbReference>
<comment type="subcellular location">
    <subcellularLocation>
        <location>Plastid</location>
        <location>Chloroplast</location>
    </subcellularLocation>
</comment>
<comment type="similarity">
    <text evidence="1">Belongs to the bacterial ribosomal protein bL36 family.</text>
</comment>
<feature type="chain" id="PRO_0000344748" description="Large ribosomal subunit protein bL36c">
    <location>
        <begin position="1"/>
        <end position="37"/>
    </location>
</feature>
<sequence length="37" mass="4460">MKIRASVRKICEKCRLIRRRGRIIVICSNPRHKQRQG</sequence>
<gene>
    <name evidence="1" type="primary">rpl36</name>
</gene>
<reference key="1">
    <citation type="journal article" date="2007" name="Proc. Natl. Acad. Sci. U.S.A.">
        <title>Using plastid genome-scale data to resolve enigmatic relationships among basal angiosperms.</title>
        <authorList>
            <person name="Moore M.J."/>
            <person name="Bell C.D."/>
            <person name="Soltis P.S."/>
            <person name="Soltis D.E."/>
        </authorList>
    </citation>
    <scope>NUCLEOTIDE SEQUENCE [LARGE SCALE GENOMIC DNA]</scope>
</reference>
<evidence type="ECO:0000255" key="1">
    <source>
        <dbReference type="HAMAP-Rule" id="MF_00251"/>
    </source>
</evidence>
<evidence type="ECO:0000305" key="2"/>
<accession>A8SED7</accession>
<keyword id="KW-0150">Chloroplast</keyword>
<keyword id="KW-0934">Plastid</keyword>
<keyword id="KW-0687">Ribonucleoprotein</keyword>
<keyword id="KW-0689">Ribosomal protein</keyword>
<geneLocation type="chloroplast"/>
<name>RK36_CERDE</name>
<protein>
    <recommendedName>
        <fullName evidence="1">Large ribosomal subunit protein bL36c</fullName>
    </recommendedName>
    <alternativeName>
        <fullName evidence="2">50S ribosomal protein L36, chloroplastic</fullName>
    </alternativeName>
</protein>
<organism>
    <name type="scientific">Ceratophyllum demersum</name>
    <name type="common">Rigid hornwort</name>
    <name type="synonym">Coontail</name>
    <dbReference type="NCBI Taxonomy" id="4428"/>
    <lineage>
        <taxon>Eukaryota</taxon>
        <taxon>Viridiplantae</taxon>
        <taxon>Streptophyta</taxon>
        <taxon>Embryophyta</taxon>
        <taxon>Tracheophyta</taxon>
        <taxon>Spermatophyta</taxon>
        <taxon>Magnoliopsida</taxon>
        <taxon>Ceratophyllales</taxon>
        <taxon>Ceratophyllaceae</taxon>
        <taxon>Ceratophyllum</taxon>
    </lineage>
</organism>
<proteinExistence type="inferred from homology"/>